<keyword id="KW-0002">3D-structure</keyword>
<keyword id="KW-1185">Reference proteome</keyword>
<keyword id="KW-0687">Ribonucleoprotein</keyword>
<keyword id="KW-0689">Ribosomal protein</keyword>
<keyword id="KW-0694">RNA-binding</keyword>
<keyword id="KW-0699">rRNA-binding</keyword>
<gene>
    <name evidence="1" type="primary">rpsR</name>
    <name type="ordered locus">PA4934</name>
</gene>
<proteinExistence type="evidence at protein level"/>
<feature type="chain" id="PRO_0000111209" description="Small ribosomal subunit protein bS18">
    <location>
        <begin position="1"/>
        <end position="76"/>
    </location>
</feature>
<organism>
    <name type="scientific">Pseudomonas aeruginosa (strain ATCC 15692 / DSM 22644 / CIP 104116 / JCM 14847 / LMG 12228 / 1C / PRS 101 / PAO1)</name>
    <dbReference type="NCBI Taxonomy" id="208964"/>
    <lineage>
        <taxon>Bacteria</taxon>
        <taxon>Pseudomonadati</taxon>
        <taxon>Pseudomonadota</taxon>
        <taxon>Gammaproteobacteria</taxon>
        <taxon>Pseudomonadales</taxon>
        <taxon>Pseudomonadaceae</taxon>
        <taxon>Pseudomonas</taxon>
    </lineage>
</organism>
<sequence length="76" mass="8873">MARFFRRRKFCRFTAEGVKEIDYKDLNTLKAYVSETGKIVPSRITGTKAKYQRQLATAIKRARYLALLPYTDSHGR</sequence>
<accession>Q9HUN0</accession>
<evidence type="ECO:0000255" key="1">
    <source>
        <dbReference type="HAMAP-Rule" id="MF_00270"/>
    </source>
</evidence>
<evidence type="ECO:0000305" key="2"/>
<name>RS18_PSEAE</name>
<dbReference type="EMBL" id="AE004091">
    <property type="protein sequence ID" value="AAG08319.1"/>
    <property type="molecule type" value="Genomic_DNA"/>
</dbReference>
<dbReference type="PIR" id="H83029">
    <property type="entry name" value="H83029"/>
</dbReference>
<dbReference type="RefSeq" id="NP_253621.1">
    <property type="nucleotide sequence ID" value="NC_002516.2"/>
</dbReference>
<dbReference type="RefSeq" id="WP_003095634.1">
    <property type="nucleotide sequence ID" value="NZ_QZGE01000002.1"/>
</dbReference>
<dbReference type="PDB" id="7UNR">
    <property type="method" value="EM"/>
    <property type="resolution" value="2.90 A"/>
    <property type="chains" value="r=1-76"/>
</dbReference>
<dbReference type="PDB" id="7UNU">
    <property type="method" value="EM"/>
    <property type="resolution" value="2.90 A"/>
    <property type="chains" value="r=1-76"/>
</dbReference>
<dbReference type="PDB" id="7UNV">
    <property type="method" value="EM"/>
    <property type="resolution" value="2.70 A"/>
    <property type="chains" value="r=1-76"/>
</dbReference>
<dbReference type="PDB" id="7UNW">
    <property type="method" value="EM"/>
    <property type="resolution" value="2.60 A"/>
    <property type="chains" value="r=1-76"/>
</dbReference>
<dbReference type="PDB" id="8CD1">
    <property type="method" value="EM"/>
    <property type="resolution" value="3.00 A"/>
    <property type="chains" value="r=1-76"/>
</dbReference>
<dbReference type="PDB" id="8RWG">
    <property type="method" value="EM"/>
    <property type="resolution" value="2.46 A"/>
    <property type="chains" value="q=1-76"/>
</dbReference>
<dbReference type="PDBsum" id="7UNR"/>
<dbReference type="PDBsum" id="7UNU"/>
<dbReference type="PDBsum" id="7UNV"/>
<dbReference type="PDBsum" id="7UNW"/>
<dbReference type="PDBsum" id="8CD1"/>
<dbReference type="PDBsum" id="8RWG"/>
<dbReference type="EMDB" id="EMD-16566"/>
<dbReference type="EMDB" id="EMD-19547"/>
<dbReference type="EMDB" id="EMD-26630"/>
<dbReference type="EMDB" id="EMD-26633"/>
<dbReference type="EMDB" id="EMD-26634"/>
<dbReference type="EMDB" id="EMD-26635"/>
<dbReference type="SMR" id="Q9HUN0"/>
<dbReference type="FunCoup" id="Q9HUN0">
    <property type="interactions" value="751"/>
</dbReference>
<dbReference type="STRING" id="208964.PA4934"/>
<dbReference type="PaxDb" id="208964-PA4934"/>
<dbReference type="DNASU" id="878035"/>
<dbReference type="GeneID" id="79910526"/>
<dbReference type="GeneID" id="878035"/>
<dbReference type="KEGG" id="pae:PA4934"/>
<dbReference type="PATRIC" id="fig|208964.12.peg.5167"/>
<dbReference type="PseudoCAP" id="PA4934"/>
<dbReference type="HOGENOM" id="CLU_148710_2_3_6"/>
<dbReference type="InParanoid" id="Q9HUN0"/>
<dbReference type="OrthoDB" id="9812008at2"/>
<dbReference type="PhylomeDB" id="Q9HUN0"/>
<dbReference type="BioCyc" id="PAER208964:G1FZ6-5048-MONOMER"/>
<dbReference type="PRO" id="PR:Q9HUN0"/>
<dbReference type="Proteomes" id="UP000002438">
    <property type="component" value="Chromosome"/>
</dbReference>
<dbReference type="GO" id="GO:0022627">
    <property type="term" value="C:cytosolic small ribosomal subunit"/>
    <property type="evidence" value="ECO:0000318"/>
    <property type="project" value="GO_Central"/>
</dbReference>
<dbReference type="GO" id="GO:0070181">
    <property type="term" value="F:small ribosomal subunit rRNA binding"/>
    <property type="evidence" value="ECO:0000318"/>
    <property type="project" value="GO_Central"/>
</dbReference>
<dbReference type="GO" id="GO:0003735">
    <property type="term" value="F:structural constituent of ribosome"/>
    <property type="evidence" value="ECO:0000318"/>
    <property type="project" value="GO_Central"/>
</dbReference>
<dbReference type="GO" id="GO:0006412">
    <property type="term" value="P:translation"/>
    <property type="evidence" value="ECO:0000318"/>
    <property type="project" value="GO_Central"/>
</dbReference>
<dbReference type="FunFam" id="4.10.640.10:FF:000001">
    <property type="entry name" value="30S ribosomal protein S18"/>
    <property type="match status" value="1"/>
</dbReference>
<dbReference type="Gene3D" id="4.10.640.10">
    <property type="entry name" value="Ribosomal protein S18"/>
    <property type="match status" value="1"/>
</dbReference>
<dbReference type="HAMAP" id="MF_00270">
    <property type="entry name" value="Ribosomal_bS18"/>
    <property type="match status" value="1"/>
</dbReference>
<dbReference type="InterPro" id="IPR001648">
    <property type="entry name" value="Ribosomal_bS18"/>
</dbReference>
<dbReference type="InterPro" id="IPR018275">
    <property type="entry name" value="Ribosomal_bS18_CS"/>
</dbReference>
<dbReference type="InterPro" id="IPR036870">
    <property type="entry name" value="Ribosomal_bS18_sf"/>
</dbReference>
<dbReference type="NCBIfam" id="TIGR00165">
    <property type="entry name" value="S18"/>
    <property type="match status" value="1"/>
</dbReference>
<dbReference type="PANTHER" id="PTHR13479">
    <property type="entry name" value="30S RIBOSOMAL PROTEIN S18"/>
    <property type="match status" value="1"/>
</dbReference>
<dbReference type="PANTHER" id="PTHR13479:SF40">
    <property type="entry name" value="SMALL RIBOSOMAL SUBUNIT PROTEIN BS18M"/>
    <property type="match status" value="1"/>
</dbReference>
<dbReference type="Pfam" id="PF01084">
    <property type="entry name" value="Ribosomal_S18"/>
    <property type="match status" value="1"/>
</dbReference>
<dbReference type="PRINTS" id="PR00974">
    <property type="entry name" value="RIBOSOMALS18"/>
</dbReference>
<dbReference type="SUPFAM" id="SSF46911">
    <property type="entry name" value="Ribosomal protein S18"/>
    <property type="match status" value="1"/>
</dbReference>
<dbReference type="PROSITE" id="PS00057">
    <property type="entry name" value="RIBOSOMAL_S18"/>
    <property type="match status" value="1"/>
</dbReference>
<protein>
    <recommendedName>
        <fullName evidence="1">Small ribosomal subunit protein bS18</fullName>
    </recommendedName>
    <alternativeName>
        <fullName evidence="2">30S ribosomal protein S18</fullName>
    </alternativeName>
</protein>
<reference key="1">
    <citation type="journal article" date="2000" name="Nature">
        <title>Complete genome sequence of Pseudomonas aeruginosa PAO1, an opportunistic pathogen.</title>
        <authorList>
            <person name="Stover C.K."/>
            <person name="Pham X.-Q.T."/>
            <person name="Erwin A.L."/>
            <person name="Mizoguchi S.D."/>
            <person name="Warrener P."/>
            <person name="Hickey M.J."/>
            <person name="Brinkman F.S.L."/>
            <person name="Hufnagle W.O."/>
            <person name="Kowalik D.J."/>
            <person name="Lagrou M."/>
            <person name="Garber R.L."/>
            <person name="Goltry L."/>
            <person name="Tolentino E."/>
            <person name="Westbrock-Wadman S."/>
            <person name="Yuan Y."/>
            <person name="Brody L.L."/>
            <person name="Coulter S.N."/>
            <person name="Folger K.R."/>
            <person name="Kas A."/>
            <person name="Larbig K."/>
            <person name="Lim R.M."/>
            <person name="Smith K.A."/>
            <person name="Spencer D.H."/>
            <person name="Wong G.K.-S."/>
            <person name="Wu Z."/>
            <person name="Paulsen I.T."/>
            <person name="Reizer J."/>
            <person name="Saier M.H. Jr."/>
            <person name="Hancock R.E.W."/>
            <person name="Lory S."/>
            <person name="Olson M.V."/>
        </authorList>
    </citation>
    <scope>NUCLEOTIDE SEQUENCE [LARGE SCALE GENOMIC DNA]</scope>
    <source>
        <strain>ATCC 15692 / DSM 22644 / CIP 104116 / JCM 14847 / LMG 12228 / 1C / PRS 101 / PAO1</strain>
    </source>
</reference>
<comment type="function">
    <text evidence="1">Binds as a heterodimer with protein bS6 to the central domain of the 16S rRNA, where it helps stabilize the platform of the 30S subunit.</text>
</comment>
<comment type="subunit">
    <text evidence="1">Part of the 30S ribosomal subunit. Forms a tight heterodimer with protein bS6.</text>
</comment>
<comment type="similarity">
    <text evidence="1">Belongs to the bacterial ribosomal protein bS18 family.</text>
</comment>